<gene>
    <name type="primary">polC</name>
    <name type="ordered locus">TK1903</name>
</gene>
<evidence type="ECO:0000250" key="1"/>
<evidence type="ECO:0000255" key="2"/>
<evidence type="ECO:0000255" key="3">
    <source>
        <dbReference type="HAMAP-Rule" id="MF_00324"/>
    </source>
</evidence>
<evidence type="ECO:0000256" key="4">
    <source>
        <dbReference type="SAM" id="MobiDB-lite"/>
    </source>
</evidence>
<evidence type="ECO:0000305" key="5"/>
<protein>
    <recommendedName>
        <fullName>DNA polymerase II large subunit</fullName>
        <shortName>Pol II</shortName>
        <ecNumber evidence="3">2.7.7.7</ecNumber>
    </recommendedName>
    <alternativeName>
        <fullName evidence="3">Exodeoxyribonuclease large subunit</fullName>
        <ecNumber evidence="3">3.1.11.1</ecNumber>
    </alternativeName>
    <component>
        <recommendedName>
            <fullName>Pko polC intein</fullName>
        </recommendedName>
        <alternativeName>
            <fullName>Pko pol II intein</fullName>
        </alternativeName>
    </component>
</protein>
<name>DP2L_THEKO</name>
<sequence length="1798" mass="204935">MSEEIYSPEMKAYFESLQREIDRAYAIARKARAQGKDPSFDVEVPQATDMAGRVESLVGPPGVAERIRELVKEYGKEIAALKVVDEIIEGKFGDLGSKEKYAEQAVRTALAILTEGIVSAPLEGIADVKIKRNEWADGSEYLALYYAGPIRSSGGTAQALSVLVGDYVRRKLGLDRFKPSDEHIERMVEEVDLYHRAVTRLQYHPEADEVRLAMRNIPIEITGEETDKVEVSHRNVPGVETNHLRGGAILVLAEGVLQKAKKLVKYIDKMGIEGWDWIKEFVEAKEKGKSSEENKDESKAEDTGTESVAEKKENVEKGFYYELYEKFRANIAPNKKYTKEIIGGRPLFAEPSTNGGFRLRYGRSRVSGFATWSVNPATMLILDEFIAIGTQMKTERPGKGCIVTPATTVEGPIVRLKNGSVVRVDDYETALKVRNEVDEILYVGDALVNFGDFVENNQTLLPANYVEEWWVQELVQAIKDLYEVELQPFAENDREAVEEAAEYLEVDPDFLWNLLKDPLRVKPDVETAIHLSTVLDIPFHPYYTLYWNTLQPEEVEELQKALLGAQIEWAEFRKNRFAKKVVLENDKNIKRYLELLGLPHRLERVEKKRKVIVVEYPWSAALLTPLGNLEWEFKAKPFYTVIDIINENNRIKLRDRGISWIGARMGRPEKAKERKMKPPVQVLFPIGLAGGQSRDIKKAAEEGKTARVEIAFFKCPKCGHVGPEHLCPVCGTRKELLWHCPKCGADYPESDAKDFNYRCPKCDVELKPYAEREIKPADLLRQAMDNVKVYGIDRLKGVKGMTSGYKMAEPLEKGLLRVKNDVYVFKDGTIRFDATDAPITHFKPKEIGTSVEKLRELGYTHDFEGKPLERDDQILELKVQDVILPYEAGRYLLKVARFIDDLLEKFYGLPRFYNAEKMEDLVGHLVIGLAPHTSAGIIGRIIGFSDVLVGYAHPYYHAAKRRNCFPGDTRILVQINGLPQRITLRELYDLFEDERYENMAYVRKKPKADVKVYSFDPESGKVVLTDIEDVIKAPSTDHLIRFELELGRSFETTVDHPVLVYENGKFVEKRAFEVREGDRILVPNLKLPEKNIDYLDLLKEFSREEFAHLHDRIMVRGIAEWLRSVEADVKEDYLRRDSIPLSVLLRVLTEKEISIEEVPSCWLGFKRDKVRIKRFVPLKPLLRVVGYYLAEGYARESKSVYQLSFSMAEKEVREDLKRALREAFGDGFGIYERGGKVTVGSRILYLLFTEVLKAGKNAYSKRVPSLVFTLPREAVAEMLKAYFEGDGSALKSVPRVVAYSVNKALLEDIETLLLAKFGIRGYYTFDNNANRGNARGRLYHVERGTEAPVSKVYALNIAGEHYHRFFNSIGFVSERKNSIYELHAEKSPAQDRYSSQNGWLVKVRRIEYITPKDDFVFSLNAKKYHNVIINESIVTHQCDGDEDAVMLLLDALLNFSKYYLPEKRGGKMDAPLVVTTRLDPREVDSEVHNMDVVRYYPLEFYKATYELKSPKEVKVIERVEDRLGKPEMYEGIKFTHDTDDIGLGPKMSLYKQLGDMEEKVARQLALAERIRAVDEHHVAETIINSHLVPDLRGNLRSFTRQEFRCVKCNTKYRRPPLTGKCPKCGGKIVLTVSKGAIEKYLPTAKMLVTKYRVKDYTRQRICITEKDIKTLFENVFPEKQRTLMGFSADICEKMVKERTGHSNGKNGYLDEFNGKNGKASKKSGSLASKLSGKGKEPSKKKESAKPKRSEKVKNLTSFEAAAKNEQARGTAGNAKKAESEKPKRKKRKGISLDEFFGS</sequence>
<keyword id="KW-0002">3D-structure</keyword>
<keyword id="KW-0068">Autocatalytic cleavage</keyword>
<keyword id="KW-0235">DNA replication</keyword>
<keyword id="KW-0238">DNA-binding</keyword>
<keyword id="KW-0239">DNA-directed DNA polymerase</keyword>
<keyword id="KW-0255">Endonuclease</keyword>
<keyword id="KW-0269">Exonuclease</keyword>
<keyword id="KW-0378">Hydrolase</keyword>
<keyword id="KW-0404">Intron homing</keyword>
<keyword id="KW-0511">Multifunctional enzyme</keyword>
<keyword id="KW-0540">Nuclease</keyword>
<keyword id="KW-0548">Nucleotidyltransferase</keyword>
<keyword id="KW-0651">Protein splicing</keyword>
<keyword id="KW-1185">Reference proteome</keyword>
<keyword id="KW-0808">Transferase</keyword>
<organism>
    <name type="scientific">Thermococcus kodakarensis (strain ATCC BAA-918 / JCM 12380 / KOD1)</name>
    <name type="common">Pyrococcus kodakaraensis (strain KOD1)</name>
    <dbReference type="NCBI Taxonomy" id="69014"/>
    <lineage>
        <taxon>Archaea</taxon>
        <taxon>Methanobacteriati</taxon>
        <taxon>Methanobacteriota</taxon>
        <taxon>Thermococci</taxon>
        <taxon>Thermococcales</taxon>
        <taxon>Thermococcaceae</taxon>
        <taxon>Thermococcus</taxon>
    </lineage>
</organism>
<dbReference type="EC" id="2.7.7.7" evidence="3"/>
<dbReference type="EC" id="3.1.11.1" evidence="3"/>
<dbReference type="EMBL" id="AP006878">
    <property type="protein sequence ID" value="BAD86092.1"/>
    <property type="molecule type" value="Genomic_DNA"/>
</dbReference>
<dbReference type="RefSeq" id="WP_011250854.1">
    <property type="nucleotide sequence ID" value="NC_006624.1"/>
</dbReference>
<dbReference type="PDB" id="6KNB">
    <property type="method" value="EM"/>
    <property type="resolution" value="6.90 A"/>
    <property type="chains" value="B=1-1798"/>
</dbReference>
<dbReference type="PDB" id="6KNC">
    <property type="method" value="EM"/>
    <property type="resolution" value="9.30 A"/>
    <property type="chains" value="B=1-1798"/>
</dbReference>
<dbReference type="PDBsum" id="6KNB"/>
<dbReference type="PDBsum" id="6KNC"/>
<dbReference type="SMR" id="Q5JET0"/>
<dbReference type="FunCoup" id="Q5JET0">
    <property type="interactions" value="20"/>
</dbReference>
<dbReference type="STRING" id="69014.TK1903"/>
<dbReference type="MEROPS" id="N10.005"/>
<dbReference type="EnsemblBacteria" id="BAD86092">
    <property type="protein sequence ID" value="BAD86092"/>
    <property type="gene ID" value="TK1903"/>
</dbReference>
<dbReference type="GeneID" id="78448434"/>
<dbReference type="KEGG" id="tko:TK1903"/>
<dbReference type="PATRIC" id="fig|69014.16.peg.1861"/>
<dbReference type="eggNOG" id="arCOG03145">
    <property type="taxonomic scope" value="Archaea"/>
</dbReference>
<dbReference type="eggNOG" id="arCOG04447">
    <property type="taxonomic scope" value="Archaea"/>
</dbReference>
<dbReference type="HOGENOM" id="CLU_001154_0_0_2"/>
<dbReference type="InParanoid" id="Q5JET0"/>
<dbReference type="OrthoDB" id="7529at2157"/>
<dbReference type="PhylomeDB" id="Q5JET0"/>
<dbReference type="Proteomes" id="UP000000536">
    <property type="component" value="Chromosome"/>
</dbReference>
<dbReference type="GO" id="GO:0003677">
    <property type="term" value="F:DNA binding"/>
    <property type="evidence" value="ECO:0007669"/>
    <property type="project" value="UniProtKB-UniRule"/>
</dbReference>
<dbReference type="GO" id="GO:0003887">
    <property type="term" value="F:DNA-directed DNA polymerase activity"/>
    <property type="evidence" value="ECO:0007669"/>
    <property type="project" value="UniProtKB-UniRule"/>
</dbReference>
<dbReference type="GO" id="GO:0004519">
    <property type="term" value="F:endonuclease activity"/>
    <property type="evidence" value="ECO:0007669"/>
    <property type="project" value="UniProtKB-KW"/>
</dbReference>
<dbReference type="GO" id="GO:0008310">
    <property type="term" value="F:single-stranded DNA 3'-5' DNA exonuclease activity"/>
    <property type="evidence" value="ECO:0007669"/>
    <property type="project" value="UniProtKB-EC"/>
</dbReference>
<dbReference type="GO" id="GO:0006308">
    <property type="term" value="P:DNA catabolic process"/>
    <property type="evidence" value="ECO:0007669"/>
    <property type="project" value="UniProtKB-UniRule"/>
</dbReference>
<dbReference type="GO" id="GO:0006261">
    <property type="term" value="P:DNA-templated DNA replication"/>
    <property type="evidence" value="ECO:0007669"/>
    <property type="project" value="UniProtKB-UniRule"/>
</dbReference>
<dbReference type="GO" id="GO:0016539">
    <property type="term" value="P:intein-mediated protein splicing"/>
    <property type="evidence" value="ECO:0007669"/>
    <property type="project" value="InterPro"/>
</dbReference>
<dbReference type="GO" id="GO:0006314">
    <property type="term" value="P:intron homing"/>
    <property type="evidence" value="ECO:0007669"/>
    <property type="project" value="UniProtKB-KW"/>
</dbReference>
<dbReference type="CDD" id="cd00081">
    <property type="entry name" value="Hint"/>
    <property type="match status" value="1"/>
</dbReference>
<dbReference type="Gene3D" id="2.170.16.10">
    <property type="entry name" value="Hedgehog/Intein (Hint) domain"/>
    <property type="match status" value="1"/>
</dbReference>
<dbReference type="Gene3D" id="3.10.28.10">
    <property type="entry name" value="Homing endonucleases"/>
    <property type="match status" value="1"/>
</dbReference>
<dbReference type="HAMAP" id="MF_00324">
    <property type="entry name" value="DNApol_II_L_arch"/>
    <property type="match status" value="1"/>
</dbReference>
<dbReference type="InterPro" id="IPR003586">
    <property type="entry name" value="Hint_dom_C"/>
</dbReference>
<dbReference type="InterPro" id="IPR003587">
    <property type="entry name" value="Hint_dom_N"/>
</dbReference>
<dbReference type="InterPro" id="IPR036844">
    <property type="entry name" value="Hint_dom_sf"/>
</dbReference>
<dbReference type="InterPro" id="IPR027434">
    <property type="entry name" value="Homing_endonucl"/>
</dbReference>
<dbReference type="InterPro" id="IPR006142">
    <property type="entry name" value="INTEIN"/>
</dbReference>
<dbReference type="InterPro" id="IPR030934">
    <property type="entry name" value="Intein_C"/>
</dbReference>
<dbReference type="InterPro" id="IPR004042">
    <property type="entry name" value="Intein_endonuc_central"/>
</dbReference>
<dbReference type="InterPro" id="IPR006141">
    <property type="entry name" value="Intein_N"/>
</dbReference>
<dbReference type="InterPro" id="IPR004860">
    <property type="entry name" value="LAGLIDADG_dom"/>
</dbReference>
<dbReference type="InterPro" id="IPR004475">
    <property type="entry name" value="PolC_DP2"/>
</dbReference>
<dbReference type="InterPro" id="IPR056172">
    <property type="entry name" value="PolC_DP2_cat_dom"/>
</dbReference>
<dbReference type="InterPro" id="IPR056171">
    <property type="entry name" value="PolC_DP2_central_dom"/>
</dbReference>
<dbReference type="InterPro" id="IPR016033">
    <property type="entry name" value="PolC_DP2_N"/>
</dbReference>
<dbReference type="NCBIfam" id="TIGR01445">
    <property type="entry name" value="intein_Nterm"/>
    <property type="match status" value="1"/>
</dbReference>
<dbReference type="NCBIfam" id="TIGR00354">
    <property type="entry name" value="polC"/>
    <property type="match status" value="1"/>
</dbReference>
<dbReference type="NCBIfam" id="NF011303">
    <property type="entry name" value="PRK14715.1"/>
    <property type="match status" value="1"/>
</dbReference>
<dbReference type="PANTHER" id="PTHR42210">
    <property type="entry name" value="DNA POLYMERASE II LARGE SUBUNIT"/>
    <property type="match status" value="1"/>
</dbReference>
<dbReference type="PANTHER" id="PTHR42210:SF1">
    <property type="entry name" value="DNA POLYMERASE II LARGE SUBUNIT"/>
    <property type="match status" value="1"/>
</dbReference>
<dbReference type="Pfam" id="PF14890">
    <property type="entry name" value="Intein_splicing"/>
    <property type="match status" value="1"/>
</dbReference>
<dbReference type="Pfam" id="PF14528">
    <property type="entry name" value="LAGLIDADG_3"/>
    <property type="match status" value="1"/>
</dbReference>
<dbReference type="Pfam" id="PF24846">
    <property type="entry name" value="PolC_DP2_cat"/>
    <property type="match status" value="2"/>
</dbReference>
<dbReference type="Pfam" id="PF24844">
    <property type="entry name" value="PolC_DP2_central"/>
    <property type="match status" value="1"/>
</dbReference>
<dbReference type="Pfam" id="PF03833">
    <property type="entry name" value="PolC_DP2_N"/>
    <property type="match status" value="1"/>
</dbReference>
<dbReference type="PRINTS" id="PR00379">
    <property type="entry name" value="INTEIN"/>
</dbReference>
<dbReference type="SMART" id="SM00305">
    <property type="entry name" value="HintC"/>
    <property type="match status" value="1"/>
</dbReference>
<dbReference type="SMART" id="SM00306">
    <property type="entry name" value="HintN"/>
    <property type="match status" value="1"/>
</dbReference>
<dbReference type="SUPFAM" id="SSF51294">
    <property type="entry name" value="Hedgehog/intein (Hint) domain"/>
    <property type="match status" value="1"/>
</dbReference>
<dbReference type="SUPFAM" id="SSF55608">
    <property type="entry name" value="Homing endonucleases"/>
    <property type="match status" value="1"/>
</dbReference>
<dbReference type="PROSITE" id="PS50818">
    <property type="entry name" value="INTEIN_C_TER"/>
    <property type="match status" value="1"/>
</dbReference>
<dbReference type="PROSITE" id="PS50819">
    <property type="entry name" value="INTEIN_ENDONUCLEASE"/>
    <property type="match status" value="1"/>
</dbReference>
<dbReference type="PROSITE" id="PS50817">
    <property type="entry name" value="INTEIN_N_TER"/>
    <property type="match status" value="1"/>
</dbReference>
<comment type="function">
    <text evidence="1">Possesses two activities: a DNA synthesis (polymerase) and an exonucleolytic activity that degrades single-stranded DNA in the 3'- to 5'-direction. Has a template-primer preference which is characteristic of a replicative DNA polymerase (By similarity).</text>
</comment>
<comment type="catalytic activity">
    <reaction>
        <text>DNA(n) + a 2'-deoxyribonucleoside 5'-triphosphate = DNA(n+1) + diphosphate</text>
        <dbReference type="Rhea" id="RHEA:22508"/>
        <dbReference type="Rhea" id="RHEA-COMP:17339"/>
        <dbReference type="Rhea" id="RHEA-COMP:17340"/>
        <dbReference type="ChEBI" id="CHEBI:33019"/>
        <dbReference type="ChEBI" id="CHEBI:61560"/>
        <dbReference type="ChEBI" id="CHEBI:173112"/>
        <dbReference type="EC" id="2.7.7.7"/>
    </reaction>
</comment>
<comment type="catalytic activity">
    <reaction evidence="3">
        <text>Exonucleolytic cleavage in the 3'- to 5'-direction to yield nucleoside 5'-phosphates.</text>
        <dbReference type="EC" id="3.1.11.1"/>
    </reaction>
</comment>
<comment type="subunit">
    <text evidence="1">Heterodimer of a large subunit and a small subunit.</text>
</comment>
<comment type="PTM">
    <text evidence="5">This protein undergoes a protein self splicing that involves a post-translational excision of the intervening region (intein) followed by peptide ligation.</text>
</comment>
<comment type="similarity">
    <text evidence="5">Belongs to the archaeal DNA polymerase II family.</text>
</comment>
<accession>Q5JET0</accession>
<reference key="1">
    <citation type="journal article" date="2005" name="Genome Res.">
        <title>Complete genome sequence of the hyperthermophilic archaeon Thermococcus kodakaraensis KOD1 and comparison with Pyrococcus genomes.</title>
        <authorList>
            <person name="Fukui T."/>
            <person name="Atomi H."/>
            <person name="Kanai T."/>
            <person name="Matsumi R."/>
            <person name="Fujiwara S."/>
            <person name="Imanaka T."/>
        </authorList>
    </citation>
    <scope>NUCLEOTIDE SEQUENCE [LARGE SCALE GENOMIC DNA]</scope>
    <source>
        <strain>ATCC BAA-918 / JCM 12380 / KOD1</strain>
    </source>
</reference>
<proteinExistence type="evidence at protein level"/>
<feature type="chain" id="PRO_0000007310" description="DNA polymerase II large subunit, 1st part" evidence="2">
    <location>
        <begin position="1"/>
        <end position="963"/>
    </location>
</feature>
<feature type="chain" id="PRO_0000007311" description="Pko polC intein" evidence="2">
    <location>
        <begin position="964"/>
        <end position="1437"/>
    </location>
</feature>
<feature type="chain" id="PRO_0000007312" description="DNA polymerase II large subunit, 2nd part" evidence="2">
    <location>
        <begin position="1438"/>
        <end position="1798"/>
    </location>
</feature>
<feature type="domain" description="DOD-type homing endonuclease">
    <location>
        <begin position="1184"/>
        <end position="1319"/>
    </location>
</feature>
<feature type="region of interest" description="Disordered" evidence="4">
    <location>
        <begin position="286"/>
        <end position="309"/>
    </location>
</feature>
<feature type="region of interest" description="Disordered" evidence="4">
    <location>
        <begin position="1699"/>
        <end position="1798"/>
    </location>
</feature>
<feature type="compositionally biased region" description="Low complexity" evidence="4">
    <location>
        <begin position="1714"/>
        <end position="1731"/>
    </location>
</feature>
<feature type="compositionally biased region" description="Basic and acidic residues" evidence="4">
    <location>
        <begin position="1733"/>
        <end position="1753"/>
    </location>
</feature>